<evidence type="ECO:0000255" key="1">
    <source>
        <dbReference type="HAMAP-Rule" id="MF_01342"/>
    </source>
</evidence>
<evidence type="ECO:0000305" key="2"/>
<keyword id="KW-1185">Reference proteome</keyword>
<keyword id="KW-0687">Ribonucleoprotein</keyword>
<keyword id="KW-0689">Ribosomal protein</keyword>
<keyword id="KW-0694">RNA-binding</keyword>
<keyword id="KW-0699">rRNA-binding</keyword>
<keyword id="KW-0820">tRNA-binding</keyword>
<comment type="function">
    <text evidence="1">Binds 23S rRNA and is also seen to make contacts with the A and possibly P site tRNAs.</text>
</comment>
<comment type="subunit">
    <text evidence="1">Part of the 50S ribosomal subunit.</text>
</comment>
<comment type="similarity">
    <text evidence="1">Belongs to the universal ribosomal protein uL16 family.</text>
</comment>
<name>RL16_CAUVN</name>
<reference key="1">
    <citation type="journal article" date="2010" name="J. Bacteriol.">
        <title>The genetic basis of laboratory adaptation in Caulobacter crescentus.</title>
        <authorList>
            <person name="Marks M.E."/>
            <person name="Castro-Rojas C.M."/>
            <person name="Teiling C."/>
            <person name="Du L."/>
            <person name="Kapatral V."/>
            <person name="Walunas T.L."/>
            <person name="Crosson S."/>
        </authorList>
    </citation>
    <scope>NUCLEOTIDE SEQUENCE [LARGE SCALE GENOMIC DNA]</scope>
    <source>
        <strain>NA1000 / CB15N</strain>
    </source>
</reference>
<dbReference type="EMBL" id="CP001340">
    <property type="protein sequence ID" value="ACL94778.1"/>
    <property type="molecule type" value="Genomic_DNA"/>
</dbReference>
<dbReference type="RefSeq" id="WP_010919134.1">
    <property type="nucleotide sequence ID" value="NC_011916.1"/>
</dbReference>
<dbReference type="RefSeq" id="YP_002516686.1">
    <property type="nucleotide sequence ID" value="NC_011916.1"/>
</dbReference>
<dbReference type="SMR" id="B8H4E1"/>
<dbReference type="GeneID" id="7333045"/>
<dbReference type="KEGG" id="ccs:CCNA_01313"/>
<dbReference type="PATRIC" id="fig|565050.3.peg.1297"/>
<dbReference type="HOGENOM" id="CLU_078858_2_1_5"/>
<dbReference type="OrthoDB" id="9802589at2"/>
<dbReference type="PhylomeDB" id="B8H4E1"/>
<dbReference type="Proteomes" id="UP000001364">
    <property type="component" value="Chromosome"/>
</dbReference>
<dbReference type="GO" id="GO:0022625">
    <property type="term" value="C:cytosolic large ribosomal subunit"/>
    <property type="evidence" value="ECO:0007669"/>
    <property type="project" value="TreeGrafter"/>
</dbReference>
<dbReference type="GO" id="GO:0019843">
    <property type="term" value="F:rRNA binding"/>
    <property type="evidence" value="ECO:0007669"/>
    <property type="project" value="UniProtKB-UniRule"/>
</dbReference>
<dbReference type="GO" id="GO:0003735">
    <property type="term" value="F:structural constituent of ribosome"/>
    <property type="evidence" value="ECO:0007669"/>
    <property type="project" value="InterPro"/>
</dbReference>
<dbReference type="GO" id="GO:0000049">
    <property type="term" value="F:tRNA binding"/>
    <property type="evidence" value="ECO:0007669"/>
    <property type="project" value="UniProtKB-KW"/>
</dbReference>
<dbReference type="GO" id="GO:0006412">
    <property type="term" value="P:translation"/>
    <property type="evidence" value="ECO:0007669"/>
    <property type="project" value="UniProtKB-UniRule"/>
</dbReference>
<dbReference type="CDD" id="cd01433">
    <property type="entry name" value="Ribosomal_L16_L10e"/>
    <property type="match status" value="1"/>
</dbReference>
<dbReference type="FunFam" id="3.90.1170.10:FF:000001">
    <property type="entry name" value="50S ribosomal protein L16"/>
    <property type="match status" value="1"/>
</dbReference>
<dbReference type="Gene3D" id="3.90.1170.10">
    <property type="entry name" value="Ribosomal protein L10e/L16"/>
    <property type="match status" value="1"/>
</dbReference>
<dbReference type="HAMAP" id="MF_01342">
    <property type="entry name" value="Ribosomal_uL16"/>
    <property type="match status" value="1"/>
</dbReference>
<dbReference type="InterPro" id="IPR047873">
    <property type="entry name" value="Ribosomal_uL16"/>
</dbReference>
<dbReference type="InterPro" id="IPR000114">
    <property type="entry name" value="Ribosomal_uL16_bact-type"/>
</dbReference>
<dbReference type="InterPro" id="IPR020798">
    <property type="entry name" value="Ribosomal_uL16_CS"/>
</dbReference>
<dbReference type="InterPro" id="IPR016180">
    <property type="entry name" value="Ribosomal_uL16_dom"/>
</dbReference>
<dbReference type="InterPro" id="IPR036920">
    <property type="entry name" value="Ribosomal_uL16_sf"/>
</dbReference>
<dbReference type="NCBIfam" id="TIGR01164">
    <property type="entry name" value="rplP_bact"/>
    <property type="match status" value="1"/>
</dbReference>
<dbReference type="PANTHER" id="PTHR12220">
    <property type="entry name" value="50S/60S RIBOSOMAL PROTEIN L16"/>
    <property type="match status" value="1"/>
</dbReference>
<dbReference type="PANTHER" id="PTHR12220:SF13">
    <property type="entry name" value="LARGE RIBOSOMAL SUBUNIT PROTEIN UL16M"/>
    <property type="match status" value="1"/>
</dbReference>
<dbReference type="Pfam" id="PF00252">
    <property type="entry name" value="Ribosomal_L16"/>
    <property type="match status" value="1"/>
</dbReference>
<dbReference type="PRINTS" id="PR00060">
    <property type="entry name" value="RIBOSOMALL16"/>
</dbReference>
<dbReference type="SUPFAM" id="SSF54686">
    <property type="entry name" value="Ribosomal protein L16p/L10e"/>
    <property type="match status" value="1"/>
</dbReference>
<dbReference type="PROSITE" id="PS00586">
    <property type="entry name" value="RIBOSOMAL_L16_1"/>
    <property type="match status" value="1"/>
</dbReference>
<dbReference type="PROSITE" id="PS00701">
    <property type="entry name" value="RIBOSOMAL_L16_2"/>
    <property type="match status" value="1"/>
</dbReference>
<organism>
    <name type="scientific">Caulobacter vibrioides (strain NA1000 / CB15N)</name>
    <name type="common">Caulobacter crescentus</name>
    <dbReference type="NCBI Taxonomy" id="565050"/>
    <lineage>
        <taxon>Bacteria</taxon>
        <taxon>Pseudomonadati</taxon>
        <taxon>Pseudomonadota</taxon>
        <taxon>Alphaproteobacteria</taxon>
        <taxon>Caulobacterales</taxon>
        <taxon>Caulobacteraceae</taxon>
        <taxon>Caulobacter</taxon>
    </lineage>
</organism>
<protein>
    <recommendedName>
        <fullName evidence="1">Large ribosomal subunit protein uL16</fullName>
    </recommendedName>
    <alternativeName>
        <fullName evidence="2">50S ribosomal protein L16</fullName>
    </alternativeName>
</protein>
<gene>
    <name evidence="1" type="primary">rplP</name>
    <name type="ordered locus">CCNA_01313</name>
</gene>
<feature type="chain" id="PRO_1000166345" description="Large ribosomal subunit protein uL16">
    <location>
        <begin position="1"/>
        <end position="143"/>
    </location>
</feature>
<sequence>MLSPKKTKFRKQFKGRIHGTSKGGTLLNFGSYGLKAVEPERITARQIEAARRAITRQMKRQGRVWIRIFPDVPVTGKPAEVRMGKGKGAVDYWAARVAPGRIMFEIDGVPDDIAREALRLGAAKLPIRTRVVTRIDAGVAQEA</sequence>
<accession>B8H4E1</accession>
<proteinExistence type="inferred from homology"/>